<keyword id="KW-0002">3D-structure</keyword>
<keyword id="KW-0963">Cytoplasm</keyword>
<keyword id="KW-1185">Reference proteome</keyword>
<keyword id="KW-0687">Ribonucleoprotein</keyword>
<keyword id="KW-0689">Ribosomal protein</keyword>
<reference key="1">
    <citation type="journal article" date="2003" name="Nucleic Acids Res.">
        <title>What's in the genome of a filamentous fungus? Analysis of the Neurospora genome sequence.</title>
        <authorList>
            <person name="Mannhaupt G."/>
            <person name="Montrone C."/>
            <person name="Haase D."/>
            <person name="Mewes H.-W."/>
            <person name="Aign V."/>
            <person name="Hoheisel J.D."/>
            <person name="Fartmann B."/>
            <person name="Nyakatura G."/>
            <person name="Kempken F."/>
            <person name="Maier J."/>
            <person name="Schulte U."/>
        </authorList>
    </citation>
    <scope>NUCLEOTIDE SEQUENCE [LARGE SCALE GENOMIC DNA]</scope>
    <source>
        <strain>ATCC 24698 / 74-OR23-1A / CBS 708.71 / DSM 1257 / FGSC 987</strain>
    </source>
</reference>
<reference key="2">
    <citation type="journal article" date="2003" name="Nature">
        <title>The genome sequence of the filamentous fungus Neurospora crassa.</title>
        <authorList>
            <person name="Galagan J.E."/>
            <person name="Calvo S.E."/>
            <person name="Borkovich K.A."/>
            <person name="Selker E.U."/>
            <person name="Read N.D."/>
            <person name="Jaffe D.B."/>
            <person name="FitzHugh W."/>
            <person name="Ma L.-J."/>
            <person name="Smirnov S."/>
            <person name="Purcell S."/>
            <person name="Rehman B."/>
            <person name="Elkins T."/>
            <person name="Engels R."/>
            <person name="Wang S."/>
            <person name="Nielsen C.B."/>
            <person name="Butler J."/>
            <person name="Endrizzi M."/>
            <person name="Qui D."/>
            <person name="Ianakiev P."/>
            <person name="Bell-Pedersen D."/>
            <person name="Nelson M.A."/>
            <person name="Werner-Washburne M."/>
            <person name="Selitrennikoff C.P."/>
            <person name="Kinsey J.A."/>
            <person name="Braun E.L."/>
            <person name="Zelter A."/>
            <person name="Schulte U."/>
            <person name="Kothe G.O."/>
            <person name="Jedd G."/>
            <person name="Mewes H.-W."/>
            <person name="Staben C."/>
            <person name="Marcotte E."/>
            <person name="Greenberg D."/>
            <person name="Roy A."/>
            <person name="Foley K."/>
            <person name="Naylor J."/>
            <person name="Stange-Thomann N."/>
            <person name="Barrett R."/>
            <person name="Gnerre S."/>
            <person name="Kamal M."/>
            <person name="Kamvysselis M."/>
            <person name="Mauceli E.W."/>
            <person name="Bielke C."/>
            <person name="Rudd S."/>
            <person name="Frishman D."/>
            <person name="Krystofova S."/>
            <person name="Rasmussen C."/>
            <person name="Metzenberg R.L."/>
            <person name="Perkins D.D."/>
            <person name="Kroken S."/>
            <person name="Cogoni C."/>
            <person name="Macino G."/>
            <person name="Catcheside D.E.A."/>
            <person name="Li W."/>
            <person name="Pratt R.J."/>
            <person name="Osmani S.A."/>
            <person name="DeSouza C.P.C."/>
            <person name="Glass N.L."/>
            <person name="Orbach M.J."/>
            <person name="Berglund J.A."/>
            <person name="Voelker R."/>
            <person name="Yarden O."/>
            <person name="Plamann M."/>
            <person name="Seiler S."/>
            <person name="Dunlap J.C."/>
            <person name="Radford A."/>
            <person name="Aramayo R."/>
            <person name="Natvig D.O."/>
            <person name="Alex L.A."/>
            <person name="Mannhaupt G."/>
            <person name="Ebbole D.J."/>
            <person name="Freitag M."/>
            <person name="Paulsen I."/>
            <person name="Sachs M.S."/>
            <person name="Lander E.S."/>
            <person name="Nusbaum C."/>
            <person name="Birren B.W."/>
        </authorList>
    </citation>
    <scope>NUCLEOTIDE SEQUENCE [LARGE SCALE GENOMIC DNA]</scope>
    <source>
        <strain>ATCC 24698 / 74-OR23-1A / CBS 708.71 / DSM 1257 / FGSC 987</strain>
    </source>
</reference>
<reference key="3">
    <citation type="journal article" date="2021" name="Proc. Natl. Acad. Sci. U.S.A.">
        <title>Structure of the translating Neurospora ribosome arrested by cycloheximide.</title>
        <authorList>
            <person name="Shen L."/>
            <person name="Su Z."/>
            <person name="Yang K."/>
            <person name="Wu C."/>
            <person name="Becker T."/>
            <person name="Bell-Pedersen D."/>
            <person name="Zhang J."/>
            <person name="Sachs M.S."/>
        </authorList>
    </citation>
    <scope>STRUCTURE BY ELECTRON MICROSCOPY (2.70 ANGSTROMS)</scope>
</reference>
<comment type="function">
    <text evidence="5">Component of the ribosome, a large ribonucleoprotein complex responsible for the synthesis of proteins in the cell. The small ribosomal subunit (SSU) binds messenger RNAs (mRNAs) and translates the encoded message by selecting cognate aminoacyl-transfer RNA (tRNA) molecules. The large subunit (LSU) contains the ribosomal catalytic site termed the peptidyl transferase center (PTC), which catalyzes the formation of peptide bonds, thereby polymerizing the amino acids delivered by tRNAs into a polypeptide chain. The nascent polypeptides leave the ribosome through a tunnel in the LSU and interact with protein factors that function in enzymatic processing, targeting, and the membrane insertion of nascent chains at the exit of the ribosomal tunnel.</text>
</comment>
<comment type="subunit">
    <text evidence="2">Component of the small ribosomal subunit (SSU). Mature N.crassa ribosomes consist of a small (40S) and a large (60S) subunit. The 40S small subunit contains 1 molecule of ribosomal RNA (18S rRNA) and at least 32 different proteins. The large 60S subunit contains 3 rRNA molecules (26S, 5.8S and 5S rRNA) and at least 42 different proteins.</text>
</comment>
<comment type="subcellular location">
    <subcellularLocation>
        <location evidence="2">Cytoplasm</location>
    </subcellularLocation>
</comment>
<comment type="similarity">
    <text evidence="4">Belongs to the eukaryotic ribosomal protein eS25 family.</text>
</comment>
<dbReference type="EMBL" id="BX842597">
    <property type="protein sequence ID" value="CAE75741.1"/>
    <property type="molecule type" value="Genomic_DNA"/>
</dbReference>
<dbReference type="EMBL" id="CM002237">
    <property type="protein sequence ID" value="EAA33995.1"/>
    <property type="molecule type" value="Genomic_DNA"/>
</dbReference>
<dbReference type="RefSeq" id="XP_963231.1">
    <property type="nucleotide sequence ID" value="XM_958138.3"/>
</dbReference>
<dbReference type="PDB" id="7R81">
    <property type="method" value="EM"/>
    <property type="resolution" value="2.70 A"/>
    <property type="chains" value="a2=1-97"/>
</dbReference>
<dbReference type="PDBsum" id="7R81"/>
<dbReference type="EMDB" id="EMD-24307"/>
<dbReference type="SMR" id="Q7SC06"/>
<dbReference type="FunCoup" id="Q7SC06">
    <property type="interactions" value="887"/>
</dbReference>
<dbReference type="STRING" id="367110.Q7SC06"/>
<dbReference type="PaxDb" id="5141-EFNCRP00000009300"/>
<dbReference type="EnsemblFungi" id="EAA33995">
    <property type="protein sequence ID" value="EAA33995"/>
    <property type="gene ID" value="NCU09476"/>
</dbReference>
<dbReference type="GeneID" id="3879379"/>
<dbReference type="KEGG" id="ncr:NCU09476"/>
<dbReference type="VEuPathDB" id="FungiDB:NCU09476"/>
<dbReference type="HOGENOM" id="CLU_129470_4_0_1"/>
<dbReference type="InParanoid" id="Q7SC06"/>
<dbReference type="OMA" id="RIVHHSG"/>
<dbReference type="OrthoDB" id="10263513at2759"/>
<dbReference type="Proteomes" id="UP000001805">
    <property type="component" value="Chromosome 6, Linkage Group II"/>
</dbReference>
<dbReference type="GO" id="GO:0022627">
    <property type="term" value="C:cytosolic small ribosomal subunit"/>
    <property type="evidence" value="ECO:0000318"/>
    <property type="project" value="GO_Central"/>
</dbReference>
<dbReference type="GO" id="GO:0003735">
    <property type="term" value="F:structural constituent of ribosome"/>
    <property type="evidence" value="ECO:0000318"/>
    <property type="project" value="GO_Central"/>
</dbReference>
<dbReference type="FunFam" id="3.30.63.20:FF:000001">
    <property type="entry name" value="40S ribosomal protein S25"/>
    <property type="match status" value="1"/>
</dbReference>
<dbReference type="Gene3D" id="3.30.63.20">
    <property type="match status" value="1"/>
</dbReference>
<dbReference type="InterPro" id="IPR004977">
    <property type="entry name" value="Ribosomal_eS25"/>
</dbReference>
<dbReference type="InterPro" id="IPR036390">
    <property type="entry name" value="WH_DNA-bd_sf"/>
</dbReference>
<dbReference type="PANTHER" id="PTHR12850">
    <property type="entry name" value="40S RIBOSOMAL PROTEIN S25"/>
    <property type="match status" value="1"/>
</dbReference>
<dbReference type="Pfam" id="PF03297">
    <property type="entry name" value="Ribosomal_S25"/>
    <property type="match status" value="1"/>
</dbReference>
<dbReference type="SUPFAM" id="SSF46785">
    <property type="entry name" value="Winged helix' DNA-binding domain"/>
    <property type="match status" value="1"/>
</dbReference>
<proteinExistence type="evidence at protein level"/>
<organism>
    <name type="scientific">Neurospora crassa (strain ATCC 24698 / 74-OR23-1A / CBS 708.71 / DSM 1257 / FGSC 987)</name>
    <dbReference type="NCBI Taxonomy" id="367110"/>
    <lineage>
        <taxon>Eukaryota</taxon>
        <taxon>Fungi</taxon>
        <taxon>Dikarya</taxon>
        <taxon>Ascomycota</taxon>
        <taxon>Pezizomycotina</taxon>
        <taxon>Sordariomycetes</taxon>
        <taxon>Sordariomycetidae</taxon>
        <taxon>Sordariales</taxon>
        <taxon>Sordariaceae</taxon>
        <taxon>Neurospora</taxon>
    </lineage>
</organism>
<gene>
    <name type="primary">rps-25</name>
    <name type="ORF">B22K18.190</name>
    <name type="ORF">NCU09476</name>
</gene>
<name>RS25_NEUCR</name>
<feature type="chain" id="PRO_0000192888" description="Small ribosomal subunit protein eS25">
    <location>
        <begin position="1"/>
        <end position="97"/>
    </location>
</feature>
<feature type="region of interest" description="Disordered" evidence="1">
    <location>
        <begin position="1"/>
        <end position="24"/>
    </location>
</feature>
<feature type="compositionally biased region" description="Basic residues" evidence="1">
    <location>
        <begin position="9"/>
        <end position="18"/>
    </location>
</feature>
<sequence>MAPAASGAKKQKKKWSKGKVKDKAQHAVILDKSTSDKLYKDVQSYRLVTVATLVDRLKINGSLARRCLKDLEEKGQIKQVVGHSKMKIYTRAIGADE</sequence>
<protein>
    <recommendedName>
        <fullName evidence="3">Small ribosomal subunit protein eS25</fullName>
    </recommendedName>
    <alternativeName>
        <fullName>40S ribosomal protein S25</fullName>
    </alternativeName>
</protein>
<accession>Q7SC06</accession>
<evidence type="ECO:0000256" key="1">
    <source>
        <dbReference type="SAM" id="MobiDB-lite"/>
    </source>
</evidence>
<evidence type="ECO:0000269" key="2">
    <source>
    </source>
</evidence>
<evidence type="ECO:0000303" key="3">
    <source>
    </source>
</evidence>
<evidence type="ECO:0000305" key="4"/>
<evidence type="ECO:0000305" key="5">
    <source>
    </source>
</evidence>